<organism>
    <name type="scientific">Homo sapiens</name>
    <name type="common">Human</name>
    <dbReference type="NCBI Taxonomy" id="9606"/>
    <lineage>
        <taxon>Eukaryota</taxon>
        <taxon>Metazoa</taxon>
        <taxon>Chordata</taxon>
        <taxon>Craniata</taxon>
        <taxon>Vertebrata</taxon>
        <taxon>Euteleostomi</taxon>
        <taxon>Mammalia</taxon>
        <taxon>Eutheria</taxon>
        <taxon>Euarchontoglires</taxon>
        <taxon>Primates</taxon>
        <taxon>Haplorrhini</taxon>
        <taxon>Catarrhini</taxon>
        <taxon>Hominidae</taxon>
        <taxon>Homo</taxon>
    </lineage>
</organism>
<protein>
    <recommendedName>
        <fullName>CCR4-NOT transcription complex subunit 11</fullName>
    </recommendedName>
</protein>
<accession>Q9UKZ1</accession>
<accession>Q6P2M9</accession>
<accession>Q8N681</accession>
<reference key="1">
    <citation type="journal article" date="1999" name="Nucleic Acids Res.">
        <title>Identification of differentially expressed genes associated with HER-2/neu overexpression in human breast cancer cells.</title>
        <authorList>
            <person name="Oh J.J."/>
            <person name="Grosshans D.R."/>
            <person name="Wong S.G."/>
            <person name="Slamon D.J."/>
        </authorList>
    </citation>
    <scope>NUCLEOTIDE SEQUENCE [MRNA]</scope>
    <source>
        <tissue>Mammary gland</tissue>
    </source>
</reference>
<reference key="2">
    <citation type="journal article" date="2005" name="Nature">
        <title>Generation and annotation of the DNA sequences of human chromosomes 2 and 4.</title>
        <authorList>
            <person name="Hillier L.W."/>
            <person name="Graves T.A."/>
            <person name="Fulton R.S."/>
            <person name="Fulton L.A."/>
            <person name="Pepin K.H."/>
            <person name="Minx P."/>
            <person name="Wagner-McPherson C."/>
            <person name="Layman D."/>
            <person name="Wylie K."/>
            <person name="Sekhon M."/>
            <person name="Becker M.C."/>
            <person name="Fewell G.A."/>
            <person name="Delehaunty K.D."/>
            <person name="Miner T.L."/>
            <person name="Nash W.E."/>
            <person name="Kremitzki C."/>
            <person name="Oddy L."/>
            <person name="Du H."/>
            <person name="Sun H."/>
            <person name="Bradshaw-Cordum H."/>
            <person name="Ali J."/>
            <person name="Carter J."/>
            <person name="Cordes M."/>
            <person name="Harris A."/>
            <person name="Isak A."/>
            <person name="van Brunt A."/>
            <person name="Nguyen C."/>
            <person name="Du F."/>
            <person name="Courtney L."/>
            <person name="Kalicki J."/>
            <person name="Ozersky P."/>
            <person name="Abbott S."/>
            <person name="Armstrong J."/>
            <person name="Belter E.A."/>
            <person name="Caruso L."/>
            <person name="Cedroni M."/>
            <person name="Cotton M."/>
            <person name="Davidson T."/>
            <person name="Desai A."/>
            <person name="Elliott G."/>
            <person name="Erb T."/>
            <person name="Fronick C."/>
            <person name="Gaige T."/>
            <person name="Haakenson W."/>
            <person name="Haglund K."/>
            <person name="Holmes A."/>
            <person name="Harkins R."/>
            <person name="Kim K."/>
            <person name="Kruchowski S.S."/>
            <person name="Strong C.M."/>
            <person name="Grewal N."/>
            <person name="Goyea E."/>
            <person name="Hou S."/>
            <person name="Levy A."/>
            <person name="Martinka S."/>
            <person name="Mead K."/>
            <person name="McLellan M.D."/>
            <person name="Meyer R."/>
            <person name="Randall-Maher J."/>
            <person name="Tomlinson C."/>
            <person name="Dauphin-Kohlberg S."/>
            <person name="Kozlowicz-Reilly A."/>
            <person name="Shah N."/>
            <person name="Swearengen-Shahid S."/>
            <person name="Snider J."/>
            <person name="Strong J.T."/>
            <person name="Thompson J."/>
            <person name="Yoakum M."/>
            <person name="Leonard S."/>
            <person name="Pearman C."/>
            <person name="Trani L."/>
            <person name="Radionenko M."/>
            <person name="Waligorski J.E."/>
            <person name="Wang C."/>
            <person name="Rock S.M."/>
            <person name="Tin-Wollam A.-M."/>
            <person name="Maupin R."/>
            <person name="Latreille P."/>
            <person name="Wendl M.C."/>
            <person name="Yang S.-P."/>
            <person name="Pohl C."/>
            <person name="Wallis J.W."/>
            <person name="Spieth J."/>
            <person name="Bieri T.A."/>
            <person name="Berkowicz N."/>
            <person name="Nelson J.O."/>
            <person name="Osborne J."/>
            <person name="Ding L."/>
            <person name="Meyer R."/>
            <person name="Sabo A."/>
            <person name="Shotland Y."/>
            <person name="Sinha P."/>
            <person name="Wohldmann P.E."/>
            <person name="Cook L.L."/>
            <person name="Hickenbotham M.T."/>
            <person name="Eldred J."/>
            <person name="Williams D."/>
            <person name="Jones T.A."/>
            <person name="She X."/>
            <person name="Ciccarelli F.D."/>
            <person name="Izaurralde E."/>
            <person name="Taylor J."/>
            <person name="Schmutz J."/>
            <person name="Myers R.M."/>
            <person name="Cox D.R."/>
            <person name="Huang X."/>
            <person name="McPherson J.D."/>
            <person name="Mardis E.R."/>
            <person name="Clifton S.W."/>
            <person name="Warren W.C."/>
            <person name="Chinwalla A.T."/>
            <person name="Eddy S.R."/>
            <person name="Marra M.A."/>
            <person name="Ovcharenko I."/>
            <person name="Furey T.S."/>
            <person name="Miller W."/>
            <person name="Eichler E.E."/>
            <person name="Bork P."/>
            <person name="Suyama M."/>
            <person name="Torrents D."/>
            <person name="Waterston R.H."/>
            <person name="Wilson R.K."/>
        </authorList>
    </citation>
    <scope>NUCLEOTIDE SEQUENCE [LARGE SCALE GENOMIC DNA]</scope>
</reference>
<reference key="3">
    <citation type="journal article" date="2004" name="Genome Res.">
        <title>The status, quality, and expansion of the NIH full-length cDNA project: the Mammalian Gene Collection (MGC).</title>
        <authorList>
            <consortium name="The MGC Project Team"/>
        </authorList>
    </citation>
    <scope>NUCLEOTIDE SEQUENCE [LARGE SCALE MRNA]</scope>
    <source>
        <tissue>Brain</tissue>
        <tissue>Colon</tissue>
    </source>
</reference>
<reference key="4">
    <citation type="journal article" date="2009" name="Biochem. J.">
        <title>Human Ccr4-Not complexes contain variable deadenylase subunits.</title>
        <authorList>
            <person name="Lau N.C."/>
            <person name="Kolkman A."/>
            <person name="van Schaik F.M."/>
            <person name="Mulder K.W."/>
            <person name="Pijnappel W.W."/>
            <person name="Heck A.J."/>
            <person name="Timmers H.T."/>
        </authorList>
    </citation>
    <scope>IDENTIFICATION IN THE CCR4-NOT COMPLEX</scope>
    <scope>COMPOSITION OF THE CCR4-NOT COMPLEX</scope>
</reference>
<reference key="5">
    <citation type="journal article" date="2011" name="BMC Syst. Biol.">
        <title>Initial characterization of the human central proteome.</title>
        <authorList>
            <person name="Burkard T.R."/>
            <person name="Planyavsky M."/>
            <person name="Kaupe I."/>
            <person name="Breitwieser F.P."/>
            <person name="Buerckstuemmer T."/>
            <person name="Bennett K.L."/>
            <person name="Superti-Furga G."/>
            <person name="Colinge J."/>
        </authorList>
    </citation>
    <scope>IDENTIFICATION BY MASS SPECTROMETRY [LARGE SCALE ANALYSIS]</scope>
</reference>
<reference key="6">
    <citation type="journal article" date="2013" name="RNA Biol.">
        <title>C2ORF29/CNOT11 and CNOT10 form a new module of the CCR4-NOT complex.</title>
        <authorList>
            <person name="Mauxion F."/>
            <person name="Preve B."/>
            <person name="Seraphin B."/>
        </authorList>
    </citation>
    <scope>IDENTIFICATION IN THE CCR4-NOT COMPLEX</scope>
</reference>
<reference key="7">
    <citation type="journal article" date="2013" name="RNA Biol.">
        <title>NOT10 and C2orf29/NOT11 form a conserved module of the CCR4-NOT complex that docks onto the NOT1 N-terminal domain.</title>
        <authorList>
            <person name="Bawankar P."/>
            <person name="Loh B."/>
            <person name="Wohlbold L."/>
            <person name="Schmidt S."/>
            <person name="Izaurralde E."/>
        </authorList>
    </citation>
    <scope>INTERACTION WITH CNOT1 AND CNOT10</scope>
</reference>
<reference key="8">
    <citation type="journal article" date="2014" name="Mol. Cell. Proteomics">
        <title>Immunoaffinity enrichment and mass spectrometry analysis of protein methylation.</title>
        <authorList>
            <person name="Guo A."/>
            <person name="Gu H."/>
            <person name="Zhou J."/>
            <person name="Mulhern D."/>
            <person name="Wang Y."/>
            <person name="Lee K.A."/>
            <person name="Yang V."/>
            <person name="Aguiar M."/>
            <person name="Kornhauser J."/>
            <person name="Jia X."/>
            <person name="Ren J."/>
            <person name="Beausoleil S.A."/>
            <person name="Silva J.C."/>
            <person name="Vemulapalli V."/>
            <person name="Bedford M.T."/>
            <person name="Comb M.J."/>
        </authorList>
    </citation>
    <scope>METHYLATION [LARGE SCALE ANALYSIS] AT ARG-41</scope>
    <scope>IDENTIFICATION BY MASS SPECTROMETRY [LARGE SCALE ANALYSIS]</scope>
    <source>
        <tissue>Colon carcinoma</tissue>
    </source>
</reference>
<feature type="chain" id="PRO_0000089357" description="CCR4-NOT transcription complex subunit 11">
    <location>
        <begin position="1"/>
        <end position="510"/>
    </location>
</feature>
<feature type="region of interest" description="Disordered" evidence="1">
    <location>
        <begin position="1"/>
        <end position="63"/>
    </location>
</feature>
<feature type="region of interest" description="Disordered" evidence="1">
    <location>
        <begin position="232"/>
        <end position="259"/>
    </location>
</feature>
<feature type="compositionally biased region" description="Gly residues" evidence="1">
    <location>
        <begin position="33"/>
        <end position="58"/>
    </location>
</feature>
<feature type="compositionally biased region" description="Low complexity" evidence="1">
    <location>
        <begin position="239"/>
        <end position="259"/>
    </location>
</feature>
<feature type="modified residue" description="Omega-N-methylarginine" evidence="5">
    <location>
        <position position="41"/>
    </location>
</feature>
<feature type="sequence conflict" description="In Ref. 3; AAH64421." evidence="4" ref="3">
    <original>K</original>
    <variation>E</variation>
    <location>
        <position position="507"/>
    </location>
</feature>
<feature type="helix" evidence="7">
    <location>
        <begin position="65"/>
        <end position="75"/>
    </location>
</feature>
<feature type="helix" evidence="7">
    <location>
        <begin position="77"/>
        <end position="82"/>
    </location>
</feature>
<feature type="helix" evidence="7">
    <location>
        <begin position="85"/>
        <end position="95"/>
    </location>
</feature>
<feature type="helix" evidence="7">
    <location>
        <begin position="98"/>
        <end position="100"/>
    </location>
</feature>
<feature type="helix" evidence="7">
    <location>
        <begin position="101"/>
        <end position="113"/>
    </location>
</feature>
<feature type="turn" evidence="7">
    <location>
        <begin position="115"/>
        <end position="117"/>
    </location>
</feature>
<feature type="helix" evidence="7">
    <location>
        <begin position="121"/>
        <end position="133"/>
    </location>
</feature>
<feature type="turn" evidence="7">
    <location>
        <begin position="134"/>
        <end position="137"/>
    </location>
</feature>
<feature type="helix" evidence="7">
    <location>
        <begin position="140"/>
        <end position="142"/>
    </location>
</feature>
<feature type="helix" evidence="7">
    <location>
        <begin position="146"/>
        <end position="153"/>
    </location>
</feature>
<feature type="helix" evidence="7">
    <location>
        <begin position="179"/>
        <end position="189"/>
    </location>
</feature>
<feature type="helix" evidence="7">
    <location>
        <begin position="194"/>
        <end position="198"/>
    </location>
</feature>
<feature type="helix" evidence="7">
    <location>
        <begin position="201"/>
        <end position="205"/>
    </location>
</feature>
<feature type="helix" evidence="7">
    <location>
        <begin position="210"/>
        <end position="212"/>
    </location>
</feature>
<feature type="helix" evidence="7">
    <location>
        <begin position="219"/>
        <end position="229"/>
    </location>
</feature>
<feature type="helix" evidence="7">
    <location>
        <begin position="234"/>
        <end position="237"/>
    </location>
</feature>
<feature type="strand" evidence="7">
    <location>
        <begin position="243"/>
        <end position="245"/>
    </location>
</feature>
<feature type="helix" evidence="7">
    <location>
        <begin position="258"/>
        <end position="269"/>
    </location>
</feature>
<feature type="strand" evidence="7">
    <location>
        <begin position="271"/>
        <end position="273"/>
    </location>
</feature>
<feature type="helix" evidence="7">
    <location>
        <begin position="275"/>
        <end position="277"/>
    </location>
</feature>
<feature type="turn" evidence="8">
    <location>
        <begin position="314"/>
        <end position="317"/>
    </location>
</feature>
<feature type="helix" evidence="6">
    <location>
        <begin position="329"/>
        <end position="333"/>
    </location>
</feature>
<feature type="helix" evidence="6">
    <location>
        <begin position="340"/>
        <end position="352"/>
    </location>
</feature>
<feature type="helix" evidence="6">
    <location>
        <begin position="354"/>
        <end position="358"/>
    </location>
</feature>
<feature type="helix" evidence="6">
    <location>
        <begin position="364"/>
        <end position="366"/>
    </location>
</feature>
<feature type="helix" evidence="6">
    <location>
        <begin position="367"/>
        <end position="373"/>
    </location>
</feature>
<feature type="helix" evidence="6">
    <location>
        <begin position="375"/>
        <end position="384"/>
    </location>
</feature>
<feature type="turn" evidence="6">
    <location>
        <begin position="385"/>
        <end position="387"/>
    </location>
</feature>
<feature type="helix" evidence="6">
    <location>
        <begin position="391"/>
        <end position="398"/>
    </location>
</feature>
<feature type="helix" evidence="6">
    <location>
        <begin position="405"/>
        <end position="416"/>
    </location>
</feature>
<feature type="helix" evidence="6">
    <location>
        <begin position="422"/>
        <end position="438"/>
    </location>
</feature>
<feature type="helix" evidence="6">
    <location>
        <begin position="442"/>
        <end position="461"/>
    </location>
</feature>
<feature type="helix" evidence="6">
    <location>
        <begin position="467"/>
        <end position="480"/>
    </location>
</feature>
<feature type="turn" evidence="6">
    <location>
        <begin position="481"/>
        <end position="483"/>
    </location>
</feature>
<feature type="helix" evidence="6">
    <location>
        <begin position="485"/>
        <end position="496"/>
    </location>
</feature>
<dbReference type="EMBL" id="AF103798">
    <property type="protein sequence ID" value="AAF02418.1"/>
    <property type="molecule type" value="mRNA"/>
</dbReference>
<dbReference type="EMBL" id="AC013722">
    <property type="protein sequence ID" value="AAY15088.1"/>
    <property type="molecule type" value="Genomic_DNA"/>
</dbReference>
<dbReference type="EMBL" id="BC018664">
    <property type="protein sequence ID" value="AAH18664.2"/>
    <property type="molecule type" value="mRNA"/>
</dbReference>
<dbReference type="EMBL" id="BC064421">
    <property type="protein sequence ID" value="AAH64421.1"/>
    <property type="molecule type" value="mRNA"/>
</dbReference>
<dbReference type="CCDS" id="CCDS2050.1"/>
<dbReference type="RefSeq" id="NP_060016.3">
    <property type="nucleotide sequence ID" value="NM_017546.4"/>
</dbReference>
<dbReference type="PDB" id="8BFH">
    <property type="method" value="X-ray"/>
    <property type="resolution" value="2.20 A"/>
    <property type="chains" value="A=323-497"/>
</dbReference>
<dbReference type="PDB" id="8BFI">
    <property type="method" value="X-ray"/>
    <property type="resolution" value="3.00 A"/>
    <property type="chains" value="C=61-510"/>
</dbReference>
<dbReference type="PDB" id="8BFJ">
    <property type="method" value="X-ray"/>
    <property type="resolution" value="2.23 A"/>
    <property type="chains" value="A=323-497"/>
</dbReference>
<dbReference type="PDB" id="8FY3">
    <property type="method" value="EM"/>
    <property type="resolution" value="2.88 A"/>
    <property type="chains" value="C=256-498"/>
</dbReference>
<dbReference type="PDBsum" id="8BFH"/>
<dbReference type="PDBsum" id="8BFI"/>
<dbReference type="PDBsum" id="8BFJ"/>
<dbReference type="PDBsum" id="8FY3"/>
<dbReference type="SMR" id="Q9UKZ1"/>
<dbReference type="BioGRID" id="120724">
    <property type="interactions" value="119"/>
</dbReference>
<dbReference type="ComplexPortal" id="CPX-2522">
    <property type="entry name" value="CCR4-NOT mRNA deadenylase complex, CNOT6L-CNOT7 variant"/>
</dbReference>
<dbReference type="ComplexPortal" id="CPX-2535">
    <property type="entry name" value="CCR4-NOT mRNA deadenylase complex, CNOT6L-CNOT8 variant"/>
</dbReference>
<dbReference type="ComplexPortal" id="CPX-2849">
    <property type="entry name" value="CCR4-NOT mRNA deadenylase complex, CNOT6-CNOT8 variant"/>
</dbReference>
<dbReference type="ComplexPortal" id="CPX-707">
    <property type="entry name" value="CCR4-NOT mRNA deadenylase complex, CNOT6-CNOT7 variant"/>
</dbReference>
<dbReference type="CORUM" id="Q9UKZ1"/>
<dbReference type="FunCoup" id="Q9UKZ1">
    <property type="interactions" value="1742"/>
</dbReference>
<dbReference type="IntAct" id="Q9UKZ1">
    <property type="interactions" value="73"/>
</dbReference>
<dbReference type="MINT" id="Q9UKZ1"/>
<dbReference type="STRING" id="9606.ENSP00000289382"/>
<dbReference type="ChEMBL" id="CHEMBL4105958"/>
<dbReference type="GlyCosmos" id="Q9UKZ1">
    <property type="glycosylation" value="2 sites, 1 glycan"/>
</dbReference>
<dbReference type="GlyGen" id="Q9UKZ1">
    <property type="glycosylation" value="3 sites, 1 O-linked glycan (2 sites)"/>
</dbReference>
<dbReference type="iPTMnet" id="Q9UKZ1"/>
<dbReference type="PhosphoSitePlus" id="Q9UKZ1"/>
<dbReference type="BioMuta" id="CNOT11"/>
<dbReference type="DMDM" id="71152358"/>
<dbReference type="jPOST" id="Q9UKZ1"/>
<dbReference type="MassIVE" id="Q9UKZ1"/>
<dbReference type="PaxDb" id="9606-ENSP00000289382"/>
<dbReference type="PeptideAtlas" id="Q9UKZ1"/>
<dbReference type="ProteomicsDB" id="84917"/>
<dbReference type="Pumba" id="Q9UKZ1"/>
<dbReference type="Antibodypedia" id="47523">
    <property type="antibodies" value="70 antibodies from 12 providers"/>
</dbReference>
<dbReference type="DNASU" id="55571"/>
<dbReference type="Ensembl" id="ENST00000289382.8">
    <property type="protein sequence ID" value="ENSP00000289382.3"/>
    <property type="gene ID" value="ENSG00000158435.8"/>
</dbReference>
<dbReference type="GeneID" id="55571"/>
<dbReference type="KEGG" id="hsa:55571"/>
<dbReference type="MANE-Select" id="ENST00000289382.8">
    <property type="protein sequence ID" value="ENSP00000289382.3"/>
    <property type="RefSeq nucleotide sequence ID" value="NM_017546.5"/>
    <property type="RefSeq protein sequence ID" value="NP_060016.3"/>
</dbReference>
<dbReference type="UCSC" id="uc002taw.5">
    <property type="organism name" value="human"/>
</dbReference>
<dbReference type="AGR" id="HGNC:25217"/>
<dbReference type="CTD" id="55571"/>
<dbReference type="DisGeNET" id="55571"/>
<dbReference type="GeneCards" id="CNOT11"/>
<dbReference type="HGNC" id="HGNC:25217">
    <property type="gene designation" value="CNOT11"/>
</dbReference>
<dbReference type="HPA" id="ENSG00000158435">
    <property type="expression patterns" value="Low tissue specificity"/>
</dbReference>
<dbReference type="MIM" id="620509">
    <property type="type" value="gene"/>
</dbReference>
<dbReference type="neXtProt" id="NX_Q9UKZ1"/>
<dbReference type="OpenTargets" id="ENSG00000158435"/>
<dbReference type="PharmGKB" id="PA134899354"/>
<dbReference type="VEuPathDB" id="HostDB:ENSG00000158435"/>
<dbReference type="eggNOG" id="KOG4508">
    <property type="taxonomic scope" value="Eukaryota"/>
</dbReference>
<dbReference type="GeneTree" id="ENSGT00390000006356"/>
<dbReference type="HOGENOM" id="CLU_028648_0_1_1"/>
<dbReference type="InParanoid" id="Q9UKZ1"/>
<dbReference type="OMA" id="PDHSVQW"/>
<dbReference type="OrthoDB" id="10265389at2759"/>
<dbReference type="PAN-GO" id="Q9UKZ1">
    <property type="GO annotations" value="3 GO annotations based on evolutionary models"/>
</dbReference>
<dbReference type="PhylomeDB" id="Q9UKZ1"/>
<dbReference type="TreeFam" id="TF323711"/>
<dbReference type="PathwayCommons" id="Q9UKZ1"/>
<dbReference type="Reactome" id="R-HSA-429947">
    <property type="pathway name" value="Deadenylation of mRNA"/>
</dbReference>
<dbReference type="Reactome" id="R-HSA-6804115">
    <property type="pathway name" value="TP53 regulates transcription of additional cell cycle genes whose exact role in the p53 pathway remain uncertain"/>
</dbReference>
<dbReference type="Reactome" id="R-HSA-9820841">
    <property type="pathway name" value="M-decay: degradation of maternal mRNAs by maternally stored factors"/>
</dbReference>
<dbReference type="SignaLink" id="Q9UKZ1"/>
<dbReference type="SIGNOR" id="Q9UKZ1"/>
<dbReference type="BioGRID-ORCS" id="55571">
    <property type="hits" value="70 hits in 1159 CRISPR screens"/>
</dbReference>
<dbReference type="CD-CODE" id="232F8A39">
    <property type="entry name" value="P-body"/>
</dbReference>
<dbReference type="CD-CODE" id="DEE660B4">
    <property type="entry name" value="Stress granule"/>
</dbReference>
<dbReference type="ChiTaRS" id="CNOT11">
    <property type="organism name" value="human"/>
</dbReference>
<dbReference type="GenomeRNAi" id="55571"/>
<dbReference type="Pharos" id="Q9UKZ1">
    <property type="development level" value="Tbio"/>
</dbReference>
<dbReference type="PRO" id="PR:Q9UKZ1"/>
<dbReference type="Proteomes" id="UP000005640">
    <property type="component" value="Chromosome 2"/>
</dbReference>
<dbReference type="RNAct" id="Q9UKZ1">
    <property type="molecule type" value="protein"/>
</dbReference>
<dbReference type="Bgee" id="ENSG00000158435">
    <property type="expression patterns" value="Expressed in oocyte and 180 other cell types or tissues"/>
</dbReference>
<dbReference type="ExpressionAtlas" id="Q9UKZ1">
    <property type="expression patterns" value="baseline and differential"/>
</dbReference>
<dbReference type="GO" id="GO:0030014">
    <property type="term" value="C:CCR4-NOT complex"/>
    <property type="evidence" value="ECO:0000314"/>
    <property type="project" value="UniProtKB"/>
</dbReference>
<dbReference type="GO" id="GO:0005829">
    <property type="term" value="C:cytosol"/>
    <property type="evidence" value="ECO:0000304"/>
    <property type="project" value="Reactome"/>
</dbReference>
<dbReference type="GO" id="GO:0005634">
    <property type="term" value="C:nucleus"/>
    <property type="evidence" value="ECO:0007669"/>
    <property type="project" value="UniProtKB-SubCell"/>
</dbReference>
<dbReference type="GO" id="GO:0000289">
    <property type="term" value="P:nuclear-transcribed mRNA poly(A) tail shortening"/>
    <property type="evidence" value="ECO:0000303"/>
    <property type="project" value="ComplexPortal"/>
</dbReference>
<dbReference type="GO" id="GO:0006417">
    <property type="term" value="P:regulation of translation"/>
    <property type="evidence" value="ECO:0007669"/>
    <property type="project" value="UniProtKB-KW"/>
</dbReference>
<dbReference type="GO" id="GO:0031047">
    <property type="term" value="P:regulatory ncRNA-mediated gene silencing"/>
    <property type="evidence" value="ECO:0007669"/>
    <property type="project" value="UniProtKB-KW"/>
</dbReference>
<dbReference type="InterPro" id="IPR019312">
    <property type="entry name" value="CNOT11"/>
</dbReference>
<dbReference type="PANTHER" id="PTHR15975">
    <property type="entry name" value="CCR4-NOT TRANSCRIPTION COMPLEX SUBUNIT 11"/>
    <property type="match status" value="1"/>
</dbReference>
<dbReference type="PANTHER" id="PTHR15975:SF0">
    <property type="entry name" value="CCR4-NOT TRANSCRIPTION COMPLEX SUBUNIT 11"/>
    <property type="match status" value="1"/>
</dbReference>
<dbReference type="Pfam" id="PF10155">
    <property type="entry name" value="CNOT11"/>
    <property type="match status" value="1"/>
</dbReference>
<keyword id="KW-0002">3D-structure</keyword>
<keyword id="KW-0963">Cytoplasm</keyword>
<keyword id="KW-0488">Methylation</keyword>
<keyword id="KW-0539">Nucleus</keyword>
<keyword id="KW-1267">Proteomics identification</keyword>
<keyword id="KW-1185">Reference proteome</keyword>
<keyword id="KW-0943">RNA-mediated gene silencing</keyword>
<keyword id="KW-0804">Transcription</keyword>
<keyword id="KW-0805">Transcription regulation</keyword>
<keyword id="KW-0810">Translation regulation</keyword>
<proteinExistence type="evidence at protein level"/>
<evidence type="ECO:0000256" key="1">
    <source>
        <dbReference type="SAM" id="MobiDB-lite"/>
    </source>
</evidence>
<evidence type="ECO:0000269" key="2">
    <source>
    </source>
</evidence>
<evidence type="ECO:0000269" key="3">
    <source>
    </source>
</evidence>
<evidence type="ECO:0000305" key="4"/>
<evidence type="ECO:0007744" key="5">
    <source>
    </source>
</evidence>
<evidence type="ECO:0007829" key="6">
    <source>
        <dbReference type="PDB" id="8BFH"/>
    </source>
</evidence>
<evidence type="ECO:0007829" key="7">
    <source>
        <dbReference type="PDB" id="8BFI"/>
    </source>
</evidence>
<evidence type="ECO:0007829" key="8">
    <source>
        <dbReference type="PDB" id="8FY3"/>
    </source>
</evidence>
<gene>
    <name type="primary">CNOT11</name>
    <name type="synonym">C2orf29</name>
    <name type="ORF">C40</name>
</gene>
<name>CNO11_HUMAN</name>
<comment type="function">
    <text>Component of the CCR4-NOT complex which is one of the major cellular mRNA deadenylases and is linked to various cellular processes including bulk mRNA degradation, miRNA-mediated repression, translational repression during translational initiation and general transcription regulation. Additional complex functions may be a consequence of its influence on mRNA expression. Is required for the association of CNOT10 with the CCR4-NOT complex. Seems not to be required for complex deadenylase function.</text>
</comment>
<comment type="subunit">
    <text evidence="2 3">Component of the CCR4-NOT complex; distinct complexes seem to exist that differ in the participation of probably mutually exclusive catalytic subunits. CNOT10 and CNOT11 form a subcomplex docked to the CNOT1 scaffold.</text>
</comment>
<comment type="interaction">
    <interactant intactId="EBI-2562014">
        <id>Q9UKZ1</id>
    </interactant>
    <interactant intactId="EBI-739879">
        <id>Q53TS8</id>
        <label>C2CD6</label>
    </interactant>
    <organismsDiffer>false</organismsDiffer>
    <experiments>3</experiments>
</comment>
<comment type="interaction">
    <interactant intactId="EBI-2562014">
        <id>Q9UKZ1</id>
    </interactant>
    <interactant intactId="EBI-1222758">
        <id>A5YKK6</id>
        <label>CNOT1</label>
    </interactant>
    <organismsDiffer>false</organismsDiffer>
    <experiments>6</experiments>
</comment>
<comment type="interaction">
    <interactant intactId="EBI-2562014">
        <id>Q9UKZ1</id>
    </interactant>
    <interactant intactId="EBI-1054261">
        <id>Q9H9A5</id>
        <label>CNOT10</label>
    </interactant>
    <organismsDiffer>false</organismsDiffer>
    <experiments>6</experiments>
</comment>
<comment type="interaction">
    <interactant intactId="EBI-2562014">
        <id>Q9UKZ1</id>
    </interactant>
    <interactant intactId="EBI-741770">
        <id>Q96PV7</id>
        <label>FAM193B</label>
    </interactant>
    <organismsDiffer>false</organismsDiffer>
    <experiments>3</experiments>
</comment>
<comment type="interaction">
    <interactant intactId="EBI-2562014">
        <id>Q9UKZ1</id>
    </interactant>
    <interactant intactId="EBI-746674">
        <id>Q9HC44</id>
        <label>GPBP1L1</label>
    </interactant>
    <organismsDiffer>false</organismsDiffer>
    <experiments>7</experiments>
</comment>
<comment type="interaction">
    <interactant intactId="EBI-2562014">
        <id>Q9UKZ1</id>
    </interactant>
    <interactant intactId="EBI-2864512">
        <id>P50221</id>
        <label>MEOX1</label>
    </interactant>
    <organismsDiffer>false</organismsDiffer>
    <experiments>3</experiments>
</comment>
<comment type="interaction">
    <interactant intactId="EBI-2562014">
        <id>Q9UKZ1</id>
    </interactant>
    <interactant intactId="EBI-2104739">
        <id>Q60809</id>
        <label>Cnot7</label>
    </interactant>
    <organismsDiffer>true</organismsDiffer>
    <experiments>3</experiments>
</comment>
<comment type="subcellular location">
    <subcellularLocation>
        <location evidence="4">Cytoplasm</location>
    </subcellularLocation>
    <subcellularLocation>
        <location evidence="4">Nucleus</location>
    </subcellularLocation>
</comment>
<comment type="similarity">
    <text evidence="4">Belongs to the CNOT11 family.</text>
</comment>
<sequence length="510" mass="55215">MPGGGASAASGRLLTAAEQRGSREAAGSASRSGFGGSGGGRGGASGPGSGSGGPGGPAGRMSLTPKELSSLLSIISEEAGGGSTFEGLSTAFHHYFSKADHFRLGSVLVMLLQQPDLLPSAAQRLTALYLLWEMYRTEPLAANPFAASFAHLLNPAPPARGGQEPDRPPLSGFLPPITPPEKFFLSQLMLAPPRELFKKTPRQIALMDVGNMGQSVDISGLQLALAERQSELPTQSKASFPSILSDPDPDSSNSGFDSSVASQITEALVSGPKPPIESHFRPEFIRPPPPLHICEDELAWLNPTEPDHAIQWDKSMCVKNSTGVEIKRIMAKAFKSPLSSPQQTQLLGELEKDPKLVYHIGLTPAKLPDLVENNPLVAIEMLLKLMQSSQITEYFSVLVNMDMSLHSMEVVNRLTTAVDLPPEFIHLYISNCISTCEQIKDKYMQNRLVRLVCVFLQSLIRNKIINVQDLFIEVQAFCIEFSRIREAAGLFRLLKTLDTGETPSETKMSK</sequence>